<organism>
    <name type="scientific">Sodalis glossinidius (strain morsitans)</name>
    <dbReference type="NCBI Taxonomy" id="343509"/>
    <lineage>
        <taxon>Bacteria</taxon>
        <taxon>Pseudomonadati</taxon>
        <taxon>Pseudomonadota</taxon>
        <taxon>Gammaproteobacteria</taxon>
        <taxon>Enterobacterales</taxon>
        <taxon>Bruguierivoracaceae</taxon>
        <taxon>Sodalis</taxon>
    </lineage>
</organism>
<comment type="function">
    <text evidence="1">Catalyzes the conversion of cytidine diphosphate diacylglycerol (CDP-DG) and glycerol 3-phosphate into phosphatidylglycerol. Essential for the synthesis of anionic phospholipids, thereby playing a role in balancing the ratio of zwitterionic and anionic phospholipids, which is thought to be important for normal membrane function.</text>
</comment>
<comment type="catalytic activity">
    <reaction evidence="1">
        <text>a CDP-1,2-diacyl-sn-glycerol + sn-glycerol 3-phosphate = a 1,2-diacyl-sn-glycero-3-phospho-(1'-sn-glycero-3'-phosphate) + CMP + H(+)</text>
        <dbReference type="Rhea" id="RHEA:12593"/>
        <dbReference type="ChEBI" id="CHEBI:15378"/>
        <dbReference type="ChEBI" id="CHEBI:57597"/>
        <dbReference type="ChEBI" id="CHEBI:58332"/>
        <dbReference type="ChEBI" id="CHEBI:60110"/>
        <dbReference type="ChEBI" id="CHEBI:60377"/>
        <dbReference type="EC" id="2.7.8.5"/>
    </reaction>
</comment>
<comment type="pathway">
    <text evidence="1">Phospholipid metabolism; phosphatidylglycerol biosynthesis; phosphatidylglycerol from CDP-diacylglycerol: step 1/2.</text>
</comment>
<comment type="subcellular location">
    <subcellularLocation>
        <location evidence="1">Cell inner membrane</location>
        <topology evidence="1">Multi-pass membrane protein</topology>
    </subcellularLocation>
</comment>
<comment type="similarity">
    <text evidence="1">Belongs to the CDP-alcohol phosphatidyltransferase class-I family.</text>
</comment>
<proteinExistence type="inferred from homology"/>
<sequence length="182" mass="20817">MQLNIPTWLTLFRVVMIPFFVLAFYLPFKWAPLCCALIFVLAAVTDWFDGFLARRWKQTTRFGAFLDPVADKVMVAMALVLVAEHFHSWWITLPAATMIAREIIISALREWMAEIGKRSSVAVSWIGKVKTTAQMLALVTLLWRPDDIVSGIGIAALYVAAVLTFWSMFQYLYAARHDLFEH</sequence>
<reference key="1">
    <citation type="journal article" date="2006" name="Genome Res.">
        <title>Massive genome erosion and functional adaptations provide insights into the symbiotic lifestyle of Sodalis glossinidius in the tsetse host.</title>
        <authorList>
            <person name="Toh H."/>
            <person name="Weiss B.L."/>
            <person name="Perkin S.A.H."/>
            <person name="Yamashita A."/>
            <person name="Oshima K."/>
            <person name="Hattori M."/>
            <person name="Aksoy S."/>
        </authorList>
    </citation>
    <scope>NUCLEOTIDE SEQUENCE [LARGE SCALE GENOMIC DNA]</scope>
    <source>
        <strain>morsitans</strain>
    </source>
</reference>
<name>PGSA_SODGM</name>
<gene>
    <name evidence="1" type="primary">pgsA</name>
    <name type="ordered locus">SG1172</name>
</gene>
<evidence type="ECO:0000255" key="1">
    <source>
        <dbReference type="HAMAP-Rule" id="MF_01437"/>
    </source>
</evidence>
<keyword id="KW-0997">Cell inner membrane</keyword>
<keyword id="KW-1003">Cell membrane</keyword>
<keyword id="KW-0444">Lipid biosynthesis</keyword>
<keyword id="KW-0443">Lipid metabolism</keyword>
<keyword id="KW-0472">Membrane</keyword>
<keyword id="KW-0594">Phospholipid biosynthesis</keyword>
<keyword id="KW-1208">Phospholipid metabolism</keyword>
<keyword id="KW-0808">Transferase</keyword>
<keyword id="KW-0812">Transmembrane</keyword>
<keyword id="KW-1133">Transmembrane helix</keyword>
<feature type="chain" id="PRO_0000239133" description="CDP-diacylglycerol--glycerol-3-phosphate 3-phosphatidyltransferase">
    <location>
        <begin position="1"/>
        <end position="182"/>
    </location>
</feature>
<feature type="topological domain" description="Cytoplasmic" evidence="1">
    <location>
        <begin position="1"/>
        <end position="12"/>
    </location>
</feature>
<feature type="transmembrane region" description="Helical" evidence="1">
    <location>
        <begin position="13"/>
        <end position="37"/>
    </location>
</feature>
<feature type="topological domain" description="Periplasmic" evidence="1">
    <location>
        <begin position="38"/>
        <end position="60"/>
    </location>
</feature>
<feature type="transmembrane region" description="Helical" evidence="1">
    <location>
        <begin position="61"/>
        <end position="81"/>
    </location>
</feature>
<feature type="topological domain" description="Cytoplasmic" evidence="1">
    <location>
        <begin position="82"/>
        <end position="86"/>
    </location>
</feature>
<feature type="transmembrane region" description="Helical" evidence="1">
    <location>
        <begin position="87"/>
        <end position="107"/>
    </location>
</feature>
<feature type="topological domain" description="Periplasmic" evidence="1">
    <location>
        <begin position="108"/>
        <end position="145"/>
    </location>
</feature>
<feature type="transmembrane region" description="Helical" evidence="1">
    <location>
        <begin position="146"/>
        <end position="168"/>
    </location>
</feature>
<feature type="topological domain" description="Cytoplasmic" evidence="1">
    <location>
        <begin position="169"/>
        <end position="181"/>
    </location>
</feature>
<protein>
    <recommendedName>
        <fullName evidence="1">CDP-diacylglycerol--glycerol-3-phosphate 3-phosphatidyltransferase</fullName>
        <ecNumber evidence="1">2.7.8.5</ecNumber>
    </recommendedName>
    <alternativeName>
        <fullName evidence="1">Phosphatidylglycerophosphate synthase</fullName>
        <shortName evidence="1">PGP synthase</shortName>
    </alternativeName>
</protein>
<dbReference type="EC" id="2.7.8.5" evidence="1"/>
<dbReference type="EMBL" id="AP008232">
    <property type="protein sequence ID" value="BAE74447.1"/>
    <property type="molecule type" value="Genomic_DNA"/>
</dbReference>
<dbReference type="RefSeq" id="WP_011411003.1">
    <property type="nucleotide sequence ID" value="NC_007712.1"/>
</dbReference>
<dbReference type="SMR" id="Q2NTS8"/>
<dbReference type="STRING" id="343509.SG1172"/>
<dbReference type="KEGG" id="sgl:SG1172"/>
<dbReference type="eggNOG" id="COG0558">
    <property type="taxonomic scope" value="Bacteria"/>
</dbReference>
<dbReference type="HOGENOM" id="CLU_051314_2_1_6"/>
<dbReference type="OrthoDB" id="9796672at2"/>
<dbReference type="BioCyc" id="SGLO343509:SGP1_RS10280-MONOMER"/>
<dbReference type="UniPathway" id="UPA00084">
    <property type="reaction ID" value="UER00503"/>
</dbReference>
<dbReference type="Proteomes" id="UP000001932">
    <property type="component" value="Chromosome"/>
</dbReference>
<dbReference type="GO" id="GO:0005886">
    <property type="term" value="C:plasma membrane"/>
    <property type="evidence" value="ECO:0007669"/>
    <property type="project" value="UniProtKB-SubCell"/>
</dbReference>
<dbReference type="GO" id="GO:0008444">
    <property type="term" value="F:CDP-diacylglycerol-glycerol-3-phosphate 3-phosphatidyltransferase activity"/>
    <property type="evidence" value="ECO:0007669"/>
    <property type="project" value="UniProtKB-UniRule"/>
</dbReference>
<dbReference type="GO" id="GO:0006655">
    <property type="term" value="P:phosphatidylglycerol biosynthetic process"/>
    <property type="evidence" value="ECO:0007669"/>
    <property type="project" value="UniProtKB-UniRule"/>
</dbReference>
<dbReference type="FunFam" id="1.20.120.1760:FF:000001">
    <property type="entry name" value="CDP-diacylglycerol--glycerol-3-phosphate 3-phosphatidyltransferase"/>
    <property type="match status" value="1"/>
</dbReference>
<dbReference type="Gene3D" id="1.20.120.1760">
    <property type="match status" value="1"/>
</dbReference>
<dbReference type="HAMAP" id="MF_01437">
    <property type="entry name" value="PgsA"/>
    <property type="match status" value="1"/>
</dbReference>
<dbReference type="InterPro" id="IPR050324">
    <property type="entry name" value="CDP-alcohol_PTase-I"/>
</dbReference>
<dbReference type="InterPro" id="IPR000462">
    <property type="entry name" value="CDP-OH_P_trans"/>
</dbReference>
<dbReference type="InterPro" id="IPR043130">
    <property type="entry name" value="CDP-OH_PTrfase_TM_dom"/>
</dbReference>
<dbReference type="InterPro" id="IPR048254">
    <property type="entry name" value="CDP_ALCOHOL_P_TRANSF_CS"/>
</dbReference>
<dbReference type="InterPro" id="IPR023762">
    <property type="entry name" value="PGP_synthase_bac"/>
</dbReference>
<dbReference type="InterPro" id="IPR004570">
    <property type="entry name" value="Phosphatidylglycerol_P_synth"/>
</dbReference>
<dbReference type="NCBIfam" id="TIGR00560">
    <property type="entry name" value="pgsA"/>
    <property type="match status" value="1"/>
</dbReference>
<dbReference type="NCBIfam" id="NF008090">
    <property type="entry name" value="PRK10832.1"/>
    <property type="match status" value="1"/>
</dbReference>
<dbReference type="PANTHER" id="PTHR14269:SF62">
    <property type="entry name" value="CDP-DIACYLGLYCEROL--GLYCEROL-3-PHOSPHATE 3-PHOSPHATIDYLTRANSFERASE 1, CHLOROPLASTIC"/>
    <property type="match status" value="1"/>
</dbReference>
<dbReference type="PANTHER" id="PTHR14269">
    <property type="entry name" value="CDP-DIACYLGLYCEROL--GLYCEROL-3-PHOSPHATE 3-PHOSPHATIDYLTRANSFERASE-RELATED"/>
    <property type="match status" value="1"/>
</dbReference>
<dbReference type="Pfam" id="PF01066">
    <property type="entry name" value="CDP-OH_P_transf"/>
    <property type="match status" value="1"/>
</dbReference>
<dbReference type="PIRSF" id="PIRSF000847">
    <property type="entry name" value="Phos_ph_gly_syn"/>
    <property type="match status" value="1"/>
</dbReference>
<dbReference type="PROSITE" id="PS00379">
    <property type="entry name" value="CDP_ALCOHOL_P_TRANSF"/>
    <property type="match status" value="1"/>
</dbReference>
<accession>Q2NTS8</accession>